<name>GELA_DICDI</name>
<organism>
    <name type="scientific">Dictyostelium discoideum</name>
    <name type="common">Social amoeba</name>
    <dbReference type="NCBI Taxonomy" id="44689"/>
    <lineage>
        <taxon>Eukaryota</taxon>
        <taxon>Amoebozoa</taxon>
        <taxon>Evosea</taxon>
        <taxon>Eumycetozoa</taxon>
        <taxon>Dictyostelia</taxon>
        <taxon>Dictyosteliales</taxon>
        <taxon>Dictyosteliaceae</taxon>
        <taxon>Dictyostelium</taxon>
    </lineage>
</organism>
<proteinExistence type="evidence at protein level"/>
<dbReference type="EMBL" id="X15430">
    <property type="protein sequence ID" value="CAA33471.1"/>
    <property type="molecule type" value="mRNA"/>
</dbReference>
<dbReference type="EMBL" id="AAFI02000005">
    <property type="protein sequence ID" value="EAL71899.1"/>
    <property type="molecule type" value="Genomic_DNA"/>
</dbReference>
<dbReference type="PIR" id="A35298">
    <property type="entry name" value="A35298"/>
</dbReference>
<dbReference type="PIR" id="S05943">
    <property type="entry name" value="S05943"/>
</dbReference>
<dbReference type="RefSeq" id="XP_646669.1">
    <property type="nucleotide sequence ID" value="XM_641577.1"/>
</dbReference>
<dbReference type="PDB" id="1KSR">
    <property type="method" value="NMR"/>
    <property type="chains" value="A=549-648"/>
</dbReference>
<dbReference type="PDB" id="1QFH">
    <property type="method" value="X-ray"/>
    <property type="resolution" value="2.20 A"/>
    <property type="chains" value="A/B=646-857"/>
</dbReference>
<dbReference type="PDB" id="1WLH">
    <property type="method" value="X-ray"/>
    <property type="resolution" value="2.80 A"/>
    <property type="chains" value="A/B=547-857"/>
</dbReference>
<dbReference type="PDB" id="2N62">
    <property type="method" value="NMR"/>
    <property type="chains" value="L=646-839"/>
</dbReference>
<dbReference type="PDB" id="6G4A">
    <property type="method" value="NMR"/>
    <property type="chains" value="A=646-750"/>
</dbReference>
<dbReference type="PDB" id="7Z20">
    <property type="method" value="EM"/>
    <property type="resolution" value="2.29 A"/>
    <property type="chains" value="z=646-765"/>
</dbReference>
<dbReference type="PDB" id="7ZP8">
    <property type="method" value="EM"/>
    <property type="resolution" value="2.20 A"/>
    <property type="chains" value="z=646-765"/>
</dbReference>
<dbReference type="PDBsum" id="1KSR"/>
<dbReference type="PDBsum" id="1QFH"/>
<dbReference type="PDBsum" id="1WLH"/>
<dbReference type="PDBsum" id="2N62"/>
<dbReference type="PDBsum" id="6G4A"/>
<dbReference type="PDBsum" id="7Z20"/>
<dbReference type="PDBsum" id="7ZP8"/>
<dbReference type="EMDB" id="EMD-14454"/>
<dbReference type="EMDB" id="EMD-14850"/>
<dbReference type="SMR" id="P13466"/>
<dbReference type="BioGRID" id="1242645">
    <property type="interactions" value="1"/>
</dbReference>
<dbReference type="FunCoup" id="P13466">
    <property type="interactions" value="2"/>
</dbReference>
<dbReference type="STRING" id="44689.P13466"/>
<dbReference type="PaxDb" id="44689-DDB0201554"/>
<dbReference type="EnsemblProtists" id="EAL71899">
    <property type="protein sequence ID" value="EAL71899"/>
    <property type="gene ID" value="DDB_G0269100"/>
</dbReference>
<dbReference type="GeneID" id="8617642"/>
<dbReference type="KEGG" id="ddi:DDB_G0269100"/>
<dbReference type="dictyBase" id="DDB_G0269100">
    <property type="gene designation" value="abpC"/>
</dbReference>
<dbReference type="VEuPathDB" id="AmoebaDB:DDB_G0269100"/>
<dbReference type="eggNOG" id="KOG0518">
    <property type="taxonomic scope" value="Eukaryota"/>
</dbReference>
<dbReference type="HOGENOM" id="CLU_333569_0_0_1"/>
<dbReference type="InParanoid" id="P13466"/>
<dbReference type="OMA" id="GWANNYL"/>
<dbReference type="PhylomeDB" id="P13466"/>
<dbReference type="Reactome" id="R-DDI-114608">
    <property type="pathway name" value="Platelet degranulation"/>
</dbReference>
<dbReference type="Reactome" id="R-DDI-1169408">
    <property type="pathway name" value="ISG15 antiviral mechanism"/>
</dbReference>
<dbReference type="Reactome" id="R-DDI-446353">
    <property type="pathway name" value="Cell-extracellular matrix interactions"/>
</dbReference>
<dbReference type="Reactome" id="R-DDI-5627123">
    <property type="pathway name" value="RHO GTPases activate PAKs"/>
</dbReference>
<dbReference type="EvolutionaryTrace" id="P13466"/>
<dbReference type="PRO" id="PR:P13466"/>
<dbReference type="Proteomes" id="UP000002195">
    <property type="component" value="Chromosome 1"/>
</dbReference>
<dbReference type="GO" id="GO:0061802">
    <property type="term" value="C:anterior cell cortex"/>
    <property type="evidence" value="ECO:0000314"/>
    <property type="project" value="dictyBase"/>
</dbReference>
<dbReference type="GO" id="GO:0005938">
    <property type="term" value="C:cell cortex"/>
    <property type="evidence" value="ECO:0000314"/>
    <property type="project" value="dictyBase"/>
</dbReference>
<dbReference type="GO" id="GO:0031252">
    <property type="term" value="C:cell leading edge"/>
    <property type="evidence" value="ECO:0000314"/>
    <property type="project" value="dictyBase"/>
</dbReference>
<dbReference type="GO" id="GO:0030864">
    <property type="term" value="C:cortical actin cytoskeleton"/>
    <property type="evidence" value="ECO:0000314"/>
    <property type="project" value="dictyBase"/>
</dbReference>
<dbReference type="GO" id="GO:0005737">
    <property type="term" value="C:cytoplasm"/>
    <property type="evidence" value="ECO:0000314"/>
    <property type="project" value="dictyBase"/>
</dbReference>
<dbReference type="GO" id="GO:0031012">
    <property type="term" value="C:extracellular matrix"/>
    <property type="evidence" value="ECO:0007005"/>
    <property type="project" value="dictyBase"/>
</dbReference>
<dbReference type="GO" id="GO:0097575">
    <property type="term" value="C:lateral cell cortex"/>
    <property type="evidence" value="ECO:0000314"/>
    <property type="project" value="dictyBase"/>
</dbReference>
<dbReference type="GO" id="GO:0070685">
    <property type="term" value="C:macropinocytic cup"/>
    <property type="evidence" value="ECO:0000314"/>
    <property type="project" value="dictyBase"/>
</dbReference>
<dbReference type="GO" id="GO:0001891">
    <property type="term" value="C:phagocytic cup"/>
    <property type="evidence" value="ECO:0000314"/>
    <property type="project" value="dictyBase"/>
</dbReference>
<dbReference type="GO" id="GO:0005886">
    <property type="term" value="C:plasma membrane"/>
    <property type="evidence" value="ECO:0000314"/>
    <property type="project" value="dictyBase"/>
</dbReference>
<dbReference type="GO" id="GO:0061803">
    <property type="term" value="C:posterior cell cortex"/>
    <property type="evidence" value="ECO:0000314"/>
    <property type="project" value="dictyBase"/>
</dbReference>
<dbReference type="GO" id="GO:0031143">
    <property type="term" value="C:pseudopodium"/>
    <property type="evidence" value="ECO:0000314"/>
    <property type="project" value="dictyBase"/>
</dbReference>
<dbReference type="GO" id="GO:0051015">
    <property type="term" value="F:actin filament binding"/>
    <property type="evidence" value="ECO:0000314"/>
    <property type="project" value="dictyBase"/>
</dbReference>
<dbReference type="GO" id="GO:0051019">
    <property type="term" value="F:mitogen-activated protein kinase binding"/>
    <property type="evidence" value="ECO:0000353"/>
    <property type="project" value="dictyBase"/>
</dbReference>
<dbReference type="GO" id="GO:0043422">
    <property type="term" value="F:protein kinase B binding"/>
    <property type="evidence" value="ECO:0000353"/>
    <property type="project" value="dictyBase"/>
</dbReference>
<dbReference type="GO" id="GO:0031267">
    <property type="term" value="F:small GTPase binding"/>
    <property type="evidence" value="ECO:0000353"/>
    <property type="project" value="dictyBase"/>
</dbReference>
<dbReference type="GO" id="GO:0051764">
    <property type="term" value="P:actin crosslink formation"/>
    <property type="evidence" value="ECO:0000315"/>
    <property type="project" value="dictyBase"/>
</dbReference>
<dbReference type="GO" id="GO:0030036">
    <property type="term" value="P:actin cytoskeleton organization"/>
    <property type="evidence" value="ECO:0000314"/>
    <property type="project" value="dictyBase"/>
</dbReference>
<dbReference type="GO" id="GO:0016477">
    <property type="term" value="P:cell migration"/>
    <property type="evidence" value="ECO:0000315"/>
    <property type="project" value="dictyBase"/>
</dbReference>
<dbReference type="GO" id="GO:0048870">
    <property type="term" value="P:cell motility"/>
    <property type="evidence" value="ECO:0000316"/>
    <property type="project" value="dictyBase"/>
</dbReference>
<dbReference type="GO" id="GO:0043327">
    <property type="term" value="P:chemotaxis to cAMP"/>
    <property type="evidence" value="ECO:0000315"/>
    <property type="project" value="dictyBase"/>
</dbReference>
<dbReference type="GO" id="GO:0006972">
    <property type="term" value="P:hyperosmotic response"/>
    <property type="evidence" value="ECO:0000316"/>
    <property type="project" value="dictyBase"/>
</dbReference>
<dbReference type="GO" id="GO:0030032">
    <property type="term" value="P:lamellipodium assembly"/>
    <property type="evidence" value="ECO:0000315"/>
    <property type="project" value="dictyBase"/>
</dbReference>
<dbReference type="GO" id="GO:0006909">
    <property type="term" value="P:phagocytosis"/>
    <property type="evidence" value="ECO:0000315"/>
    <property type="project" value="dictyBase"/>
</dbReference>
<dbReference type="GO" id="GO:0042331">
    <property type="term" value="P:phototaxis"/>
    <property type="evidence" value="ECO:0000315"/>
    <property type="project" value="dictyBase"/>
</dbReference>
<dbReference type="GO" id="GO:0046956">
    <property type="term" value="P:positive phototaxis"/>
    <property type="evidence" value="ECO:0000314"/>
    <property type="project" value="dictyBase"/>
</dbReference>
<dbReference type="GO" id="GO:0031269">
    <property type="term" value="P:pseudopodium assembly"/>
    <property type="evidence" value="ECO:0000315"/>
    <property type="project" value="dictyBase"/>
</dbReference>
<dbReference type="GO" id="GO:0031272">
    <property type="term" value="P:regulation of pseudopodium assembly"/>
    <property type="evidence" value="ECO:0000315"/>
    <property type="project" value="dictyBase"/>
</dbReference>
<dbReference type="GO" id="GO:0051591">
    <property type="term" value="P:response to cAMP"/>
    <property type="evidence" value="ECO:0000314"/>
    <property type="project" value="dictyBase"/>
</dbReference>
<dbReference type="GO" id="GO:0031153">
    <property type="term" value="P:slug development involved in sorocarp development"/>
    <property type="evidence" value="ECO:0000314"/>
    <property type="project" value="dictyBase"/>
</dbReference>
<dbReference type="GO" id="GO:0030587">
    <property type="term" value="P:sorocarp development"/>
    <property type="evidence" value="ECO:0000316"/>
    <property type="project" value="dictyBase"/>
</dbReference>
<dbReference type="GO" id="GO:0043052">
    <property type="term" value="P:thermotaxis"/>
    <property type="evidence" value="ECO:0000315"/>
    <property type="project" value="dictyBase"/>
</dbReference>
<dbReference type="CDD" id="cd21184">
    <property type="entry name" value="CH_FLN-like_rpt2"/>
    <property type="match status" value="1"/>
</dbReference>
<dbReference type="FunFam" id="1.10.418.10:FF:000006">
    <property type="entry name" value="Filamin-B isoform A"/>
    <property type="match status" value="1"/>
</dbReference>
<dbReference type="FunFam" id="2.60.40.10:FF:001987">
    <property type="entry name" value="Gelation factor"/>
    <property type="match status" value="2"/>
</dbReference>
<dbReference type="Gene3D" id="1.10.418.10">
    <property type="entry name" value="Calponin-like domain"/>
    <property type="match status" value="2"/>
</dbReference>
<dbReference type="Gene3D" id="2.60.40.10">
    <property type="entry name" value="Immunoglobulins"/>
    <property type="match status" value="6"/>
</dbReference>
<dbReference type="InterPro" id="IPR001589">
    <property type="entry name" value="Actinin_actin-bd_CS"/>
</dbReference>
<dbReference type="InterPro" id="IPR001715">
    <property type="entry name" value="CH_dom"/>
</dbReference>
<dbReference type="InterPro" id="IPR036872">
    <property type="entry name" value="CH_dom_sf"/>
</dbReference>
<dbReference type="InterPro" id="IPR044801">
    <property type="entry name" value="Filamin"/>
</dbReference>
<dbReference type="InterPro" id="IPR017868">
    <property type="entry name" value="Filamin/ABP280_repeat-like"/>
</dbReference>
<dbReference type="InterPro" id="IPR001298">
    <property type="entry name" value="Filamin/ABP280_rpt"/>
</dbReference>
<dbReference type="InterPro" id="IPR013783">
    <property type="entry name" value="Ig-like_fold"/>
</dbReference>
<dbReference type="InterPro" id="IPR014756">
    <property type="entry name" value="Ig_E-set"/>
</dbReference>
<dbReference type="PANTHER" id="PTHR38537:SF8">
    <property type="entry name" value="FILAMIN-A"/>
    <property type="match status" value="1"/>
</dbReference>
<dbReference type="PANTHER" id="PTHR38537">
    <property type="entry name" value="JITTERBUG, ISOFORM N"/>
    <property type="match status" value="1"/>
</dbReference>
<dbReference type="Pfam" id="PF00307">
    <property type="entry name" value="CH"/>
    <property type="match status" value="2"/>
</dbReference>
<dbReference type="Pfam" id="PF00630">
    <property type="entry name" value="Filamin"/>
    <property type="match status" value="6"/>
</dbReference>
<dbReference type="SMART" id="SM00033">
    <property type="entry name" value="CH"/>
    <property type="match status" value="2"/>
</dbReference>
<dbReference type="SMART" id="SM00557">
    <property type="entry name" value="IG_FLMN"/>
    <property type="match status" value="6"/>
</dbReference>
<dbReference type="SUPFAM" id="SSF47576">
    <property type="entry name" value="Calponin-homology domain, CH-domain"/>
    <property type="match status" value="1"/>
</dbReference>
<dbReference type="SUPFAM" id="SSF81296">
    <property type="entry name" value="E set domains"/>
    <property type="match status" value="6"/>
</dbReference>
<dbReference type="PROSITE" id="PS00019">
    <property type="entry name" value="ACTININ_1"/>
    <property type="match status" value="1"/>
</dbReference>
<dbReference type="PROSITE" id="PS00020">
    <property type="entry name" value="ACTININ_2"/>
    <property type="match status" value="1"/>
</dbReference>
<dbReference type="PROSITE" id="PS50021">
    <property type="entry name" value="CH"/>
    <property type="match status" value="2"/>
</dbReference>
<dbReference type="PROSITE" id="PS50194">
    <property type="entry name" value="FILAMIN_REPEAT"/>
    <property type="match status" value="6"/>
</dbReference>
<protein>
    <recommendedName>
        <fullName>Gelation factor</fullName>
    </recommendedName>
    <alternativeName>
        <fullName>Actin-binding protein 120</fullName>
        <shortName>ABP-120</shortName>
    </alternativeName>
</protein>
<gene>
    <name type="primary">abpC</name>
    <name type="ORF">DDB_G0269100</name>
</gene>
<feature type="chain" id="PRO_0000087454" description="Gelation factor">
    <location>
        <begin position="1"/>
        <end position="857"/>
    </location>
</feature>
<feature type="domain" description="Calponin-homology (CH) 1" evidence="2">
    <location>
        <begin position="12"/>
        <end position="117"/>
    </location>
</feature>
<feature type="domain" description="Calponin-homology (CH) 2" evidence="2">
    <location>
        <begin position="125"/>
        <end position="227"/>
    </location>
</feature>
<feature type="repeat" description="Filamin 1">
    <location>
        <begin position="245"/>
        <end position="346"/>
    </location>
</feature>
<feature type="repeat" description="Filamin 2">
    <location>
        <begin position="347"/>
        <end position="446"/>
    </location>
</feature>
<feature type="repeat" description="Filamin 3">
    <location>
        <begin position="447"/>
        <end position="545"/>
    </location>
</feature>
<feature type="repeat" description="Filamin 4">
    <location>
        <begin position="546"/>
        <end position="645"/>
    </location>
</feature>
<feature type="repeat" description="Filamin 5">
    <location>
        <begin position="646"/>
        <end position="747"/>
    </location>
</feature>
<feature type="repeat" description="Filamin 6">
    <location>
        <begin position="763"/>
        <end position="837"/>
    </location>
</feature>
<feature type="region of interest" description="Actin-binding">
    <location>
        <begin position="1"/>
        <end position="250"/>
    </location>
</feature>
<feature type="region of interest" description="Regulatory site" evidence="1">
    <location>
        <begin position="229"/>
        <end position="246"/>
    </location>
</feature>
<feature type="region of interest" description="Disordered" evidence="3">
    <location>
        <begin position="832"/>
        <end position="857"/>
    </location>
</feature>
<feature type="modified residue" description="Blocked amino end (Met)">
    <location>
        <position position="1"/>
    </location>
</feature>
<feature type="strand" evidence="6">
    <location>
        <begin position="551"/>
        <end position="553"/>
    </location>
</feature>
<feature type="strand" evidence="4">
    <location>
        <begin position="559"/>
        <end position="561"/>
    </location>
</feature>
<feature type="strand" evidence="4">
    <location>
        <begin position="566"/>
        <end position="568"/>
    </location>
</feature>
<feature type="strand" evidence="6">
    <location>
        <begin position="570"/>
        <end position="575"/>
    </location>
</feature>
<feature type="strand" evidence="6">
    <location>
        <begin position="578"/>
        <end position="580"/>
    </location>
</feature>
<feature type="strand" evidence="4">
    <location>
        <begin position="582"/>
        <end position="585"/>
    </location>
</feature>
<feature type="strand" evidence="6">
    <location>
        <begin position="591"/>
        <end position="599"/>
    </location>
</feature>
<feature type="strand" evidence="4">
    <location>
        <begin position="605"/>
        <end position="607"/>
    </location>
</feature>
<feature type="strand" evidence="6">
    <location>
        <begin position="609"/>
        <end position="617"/>
    </location>
</feature>
<feature type="strand" evidence="6">
    <location>
        <begin position="623"/>
        <end position="635"/>
    </location>
</feature>
<feature type="strand" evidence="6">
    <location>
        <begin position="640"/>
        <end position="646"/>
    </location>
</feature>
<feature type="turn" evidence="5">
    <location>
        <begin position="651"/>
        <end position="653"/>
    </location>
</feature>
<feature type="strand" evidence="5">
    <location>
        <begin position="655"/>
        <end position="658"/>
    </location>
</feature>
<feature type="helix" evidence="5">
    <location>
        <begin position="659"/>
        <end position="661"/>
    </location>
</feature>
<feature type="strand" evidence="5">
    <location>
        <begin position="663"/>
        <end position="665"/>
    </location>
</feature>
<feature type="strand" evidence="8">
    <location>
        <begin position="666"/>
        <end position="668"/>
    </location>
</feature>
<feature type="strand" evidence="5">
    <location>
        <begin position="670"/>
        <end position="675"/>
    </location>
</feature>
<feature type="strand" evidence="5">
    <location>
        <begin position="677"/>
        <end position="681"/>
    </location>
</feature>
<feature type="strand" evidence="5">
    <location>
        <begin position="691"/>
        <end position="696"/>
    </location>
</feature>
<feature type="helix" evidence="5">
    <location>
        <begin position="698"/>
        <end position="700"/>
    </location>
</feature>
<feature type="strand" evidence="7">
    <location>
        <begin position="702"/>
        <end position="704"/>
    </location>
</feature>
<feature type="strand" evidence="5">
    <location>
        <begin position="706"/>
        <end position="709"/>
    </location>
</feature>
<feature type="strand" evidence="5">
    <location>
        <begin position="711"/>
        <end position="719"/>
    </location>
</feature>
<feature type="strand" evidence="5">
    <location>
        <begin position="723"/>
        <end position="733"/>
    </location>
</feature>
<feature type="strand" evidence="5">
    <location>
        <begin position="742"/>
        <end position="748"/>
    </location>
</feature>
<feature type="helix" evidence="5">
    <location>
        <begin position="753"/>
        <end position="755"/>
    </location>
</feature>
<feature type="strand" evidence="5">
    <location>
        <begin position="757"/>
        <end position="766"/>
    </location>
</feature>
<feature type="strand" evidence="5">
    <location>
        <begin position="772"/>
        <end position="774"/>
    </location>
</feature>
<feature type="strand" evidence="7">
    <location>
        <begin position="777"/>
        <end position="781"/>
    </location>
</feature>
<feature type="strand" evidence="5">
    <location>
        <begin position="782"/>
        <end position="788"/>
    </location>
</feature>
<feature type="strand" evidence="5">
    <location>
        <begin position="791"/>
        <end position="799"/>
    </location>
</feature>
<feature type="strand" evidence="5">
    <location>
        <begin position="801"/>
        <end position="823"/>
    </location>
</feature>
<feature type="strand" evidence="5">
    <location>
        <begin position="832"/>
        <end position="838"/>
    </location>
</feature>
<feature type="helix" evidence="5">
    <location>
        <begin position="840"/>
        <end position="842"/>
    </location>
</feature>
<feature type="strand" evidence="5">
    <location>
        <begin position="850"/>
        <end position="856"/>
    </location>
</feature>
<sequence length="857" mass="92207">MAAAPSGKTWIDVQKKTFTGWANNYLKERILKIEDLATSLEDGVLLINLLEIISSKKILKYNKAPKIRMQKIENNNMAVNFIKSEGLKLVGIGAEDIVDSQLKLILGLIWTLILRYQIQMSESDNSPKAALLEWVRKQVAPYKVVVNNFTDSWCDGRVLSALTDSLKPGVREMSTLTGDAVQDIDRSMDIALEEYEIPKIMDANDMNSLPDELSVITYVSYFRDYALNKEKRDADALAALEKKRRETSDASKVEVYGPGVEGGFVNKSADFHIKAVNYYGEPLANGGEGFTVSVVGADGVEVPCKLVDNKNGIYDASYTATVPQDYTVVVQLDDVHCKDSPYNVKIDGSDAQHSNAYGPGLEGGKVGVPAAFKIQGRNKDGETVTQGGDDFTVKVQSPEGPVDAQIKDNGDGSYDVEYKPTKGGDHTVEVFLRGEPLAQGPTEVKILNSDSQNSYCDGPGFEKAQAKRPTEFTIHSVGADNKPCAAGGDPFQVSISGPHPVNVGITDNDDGTYTVAYTPEQPGDYEIQVTLNDEAIKDIPKSIHIKPAADPEKSYAEGPGLDGGECFQPSKFKIHAVDPDGVHRTDGGDGFVVTIEGPAPVDPVMVDNGDGTYDVEFEPKEAGDYVINLTLDGDNVNGFPKTVTVKPAPSAEHSYAEGEGLVKVFDNAPAEFTIFAVDTKGVARTDGGDPFEVAINGPDGLVVDAKVTDNNDGTYGVVYDAPVEGNYNVNVTLRGNPIKNMPIDVKCIEGANGEDSSFGSFTFTVAAKNKKGEVKTYGGDKFEVSITGPAEEITLDAIDNQDGTYTAAYSLVGNGRFSTGVKLNGKHIEGSPFKQVLGNPGKKNPEVKSFTTTRTAN</sequence>
<reference key="1">
    <citation type="journal article" date="1989" name="J. Cell Biol.">
        <title>The Dictyostelium gelation factor shares a putative actin binding site with alpha-actinins and dystrophin and also has a rod domain containing six 100-residue motifs that appear to have a cross-beta conformation.</title>
        <authorList>
            <person name="Noegel A.A."/>
            <person name="Rapp S."/>
            <person name="Lottspeich F."/>
            <person name="Schleicher M."/>
            <person name="Stewart M."/>
        </authorList>
    </citation>
    <scope>NUCLEOTIDE SEQUENCE [MRNA]</scope>
    <scope>PARTIAL PROTEIN SEQUENCE</scope>
    <source>
        <strain>AX2</strain>
    </source>
</reference>
<reference key="2">
    <citation type="journal article" date="2005" name="Nature">
        <title>The genome of the social amoeba Dictyostelium discoideum.</title>
        <authorList>
            <person name="Eichinger L."/>
            <person name="Pachebat J.A."/>
            <person name="Gloeckner G."/>
            <person name="Rajandream M.A."/>
            <person name="Sucgang R."/>
            <person name="Berriman M."/>
            <person name="Song J."/>
            <person name="Olsen R."/>
            <person name="Szafranski K."/>
            <person name="Xu Q."/>
            <person name="Tunggal B."/>
            <person name="Kummerfeld S."/>
            <person name="Madera M."/>
            <person name="Konfortov B.A."/>
            <person name="Rivero F."/>
            <person name="Bankier A.T."/>
            <person name="Lehmann R."/>
            <person name="Hamlin N."/>
            <person name="Davies R."/>
            <person name="Gaudet P."/>
            <person name="Fey P."/>
            <person name="Pilcher K."/>
            <person name="Chen G."/>
            <person name="Saunders D."/>
            <person name="Sodergren E.J."/>
            <person name="Davis P."/>
            <person name="Kerhornou A."/>
            <person name="Nie X."/>
            <person name="Hall N."/>
            <person name="Anjard C."/>
            <person name="Hemphill L."/>
            <person name="Bason N."/>
            <person name="Farbrother P."/>
            <person name="Desany B."/>
            <person name="Just E."/>
            <person name="Morio T."/>
            <person name="Rost R."/>
            <person name="Churcher C.M."/>
            <person name="Cooper J."/>
            <person name="Haydock S."/>
            <person name="van Driessche N."/>
            <person name="Cronin A."/>
            <person name="Goodhead I."/>
            <person name="Muzny D.M."/>
            <person name="Mourier T."/>
            <person name="Pain A."/>
            <person name="Lu M."/>
            <person name="Harper D."/>
            <person name="Lindsay R."/>
            <person name="Hauser H."/>
            <person name="James K.D."/>
            <person name="Quiles M."/>
            <person name="Madan Babu M."/>
            <person name="Saito T."/>
            <person name="Buchrieser C."/>
            <person name="Wardroper A."/>
            <person name="Felder M."/>
            <person name="Thangavelu M."/>
            <person name="Johnson D."/>
            <person name="Knights A."/>
            <person name="Loulseged H."/>
            <person name="Mungall K.L."/>
            <person name="Oliver K."/>
            <person name="Price C."/>
            <person name="Quail M.A."/>
            <person name="Urushihara H."/>
            <person name="Hernandez J."/>
            <person name="Rabbinowitsch E."/>
            <person name="Steffen D."/>
            <person name="Sanders M."/>
            <person name="Ma J."/>
            <person name="Kohara Y."/>
            <person name="Sharp S."/>
            <person name="Simmonds M.N."/>
            <person name="Spiegler S."/>
            <person name="Tivey A."/>
            <person name="Sugano S."/>
            <person name="White B."/>
            <person name="Walker D."/>
            <person name="Woodward J.R."/>
            <person name="Winckler T."/>
            <person name="Tanaka Y."/>
            <person name="Shaulsky G."/>
            <person name="Schleicher M."/>
            <person name="Weinstock G.M."/>
            <person name="Rosenthal A."/>
            <person name="Cox E.C."/>
            <person name="Chisholm R.L."/>
            <person name="Gibbs R.A."/>
            <person name="Loomis W.F."/>
            <person name="Platzer M."/>
            <person name="Kay R.R."/>
            <person name="Williams J.G."/>
            <person name="Dear P.H."/>
            <person name="Noegel A.A."/>
            <person name="Barrell B.G."/>
            <person name="Kuspa A."/>
        </authorList>
    </citation>
    <scope>NUCLEOTIDE SEQUENCE [LARGE SCALE GENOMIC DNA]</scope>
    <source>
        <strain>AX4</strain>
    </source>
</reference>
<reference key="3">
    <citation type="journal article" date="1990" name="J. Biol. Chem.">
        <title>Identification of a short sequence essential for actin binding by Dictyostelium ABP-120.</title>
        <authorList>
            <person name="Bresnick A.R."/>
            <person name="Warren V."/>
            <person name="Condeelis J."/>
        </authorList>
    </citation>
    <scope>ACTIN-BINDING MINIMAL DOMAIN</scope>
</reference>
<reference key="4">
    <citation type="journal article" date="1997" name="Nat. Struct. Biol.">
        <title>The repeating segments of the F-actin cross-linking gelation factor (ABP-120) have an immunoglobulin-like fold.</title>
        <authorList>
            <person name="Fucini P."/>
            <person name="Renner C."/>
            <person name="Herberhold C."/>
            <person name="Noegel A.A."/>
            <person name="Holak T.A."/>
        </authorList>
    </citation>
    <scope>STRUCTURE BY NMR OF 549-648</scope>
</reference>
<reference key="5">
    <citation type="journal article" date="1997" name="J. Struct. Biol.">
        <title>Crystallization and preliminary X-ray diffraction characterization of a dimerizing fragment of the rod domain of the Dictyostelium gelation factor (ABP-120).</title>
        <authorList>
            <person name="Fucini P."/>
            <person name="McCoy A.J."/>
            <person name="Gomez-Ortiz M."/>
            <person name="Schleicher M."/>
            <person name="Noegel A.A."/>
            <person name="Stewart M."/>
        </authorList>
    </citation>
    <scope>X-RAY CRYSTALLOGRAPHY (2.2 ANGSTROMS) OF 646-857</scope>
</reference>
<accession>P13466</accession>
<accession>Q55C12</accession>
<keyword id="KW-0002">3D-structure</keyword>
<keyword id="KW-0009">Actin-binding</keyword>
<keyword id="KW-0903">Direct protein sequencing</keyword>
<keyword id="KW-1185">Reference proteome</keyword>
<keyword id="KW-0677">Repeat</keyword>
<comment type="function">
    <text>F-actin cross-linking protein.</text>
</comment>
<comment type="subunit">
    <text>Homodimer.</text>
</comment>
<comment type="domain">
    <text>The rod domain contains six 100-residue motifs that appear to have a cross-beta conformation.</text>
</comment>
<evidence type="ECO:0000255" key="1"/>
<evidence type="ECO:0000255" key="2">
    <source>
        <dbReference type="PROSITE-ProRule" id="PRU00044"/>
    </source>
</evidence>
<evidence type="ECO:0000256" key="3">
    <source>
        <dbReference type="SAM" id="MobiDB-lite"/>
    </source>
</evidence>
<evidence type="ECO:0007829" key="4">
    <source>
        <dbReference type="PDB" id="1KSR"/>
    </source>
</evidence>
<evidence type="ECO:0007829" key="5">
    <source>
        <dbReference type="PDB" id="1QFH"/>
    </source>
</evidence>
<evidence type="ECO:0007829" key="6">
    <source>
        <dbReference type="PDB" id="1WLH"/>
    </source>
</evidence>
<evidence type="ECO:0007829" key="7">
    <source>
        <dbReference type="PDB" id="2N62"/>
    </source>
</evidence>
<evidence type="ECO:0007829" key="8">
    <source>
        <dbReference type="PDB" id="6G4A"/>
    </source>
</evidence>